<evidence type="ECO:0000256" key="1">
    <source>
        <dbReference type="SAM" id="MobiDB-lite"/>
    </source>
</evidence>
<evidence type="ECO:0000305" key="2"/>
<dbReference type="EMBL" id="U38804">
    <property type="protein sequence ID" value="AAC08096.1"/>
    <property type="molecule type" value="Genomic_DNA"/>
</dbReference>
<dbReference type="PIR" id="S73131">
    <property type="entry name" value="S73131"/>
</dbReference>
<dbReference type="RefSeq" id="NP_053820.1">
    <property type="nucleotide sequence ID" value="NC_000925.1"/>
</dbReference>
<dbReference type="SMR" id="P51210"/>
<dbReference type="GeneID" id="809834"/>
<dbReference type="GO" id="GO:0009507">
    <property type="term" value="C:chloroplast"/>
    <property type="evidence" value="ECO:0007669"/>
    <property type="project" value="UniProtKB-SubCell"/>
</dbReference>
<dbReference type="GO" id="GO:0022625">
    <property type="term" value="C:cytosolic large ribosomal subunit"/>
    <property type="evidence" value="ECO:0007669"/>
    <property type="project" value="TreeGrafter"/>
</dbReference>
<dbReference type="GO" id="GO:0003735">
    <property type="term" value="F:structural constituent of ribosome"/>
    <property type="evidence" value="ECO:0007669"/>
    <property type="project" value="InterPro"/>
</dbReference>
<dbReference type="GO" id="GO:0006412">
    <property type="term" value="P:translation"/>
    <property type="evidence" value="ECO:0007669"/>
    <property type="project" value="UniProtKB-UniRule"/>
</dbReference>
<dbReference type="FunFam" id="2.40.50.100:FF:000004">
    <property type="entry name" value="50S ribosomal protein L27"/>
    <property type="match status" value="1"/>
</dbReference>
<dbReference type="Gene3D" id="2.40.50.100">
    <property type="match status" value="1"/>
</dbReference>
<dbReference type="HAMAP" id="MF_00539">
    <property type="entry name" value="Ribosomal_bL27"/>
    <property type="match status" value="1"/>
</dbReference>
<dbReference type="InterPro" id="IPR001684">
    <property type="entry name" value="Ribosomal_bL27"/>
</dbReference>
<dbReference type="InterPro" id="IPR018261">
    <property type="entry name" value="Ribosomal_bL27_CS"/>
</dbReference>
<dbReference type="NCBIfam" id="TIGR00062">
    <property type="entry name" value="L27"/>
    <property type="match status" value="1"/>
</dbReference>
<dbReference type="PANTHER" id="PTHR15893:SF0">
    <property type="entry name" value="LARGE RIBOSOMAL SUBUNIT PROTEIN BL27M"/>
    <property type="match status" value="1"/>
</dbReference>
<dbReference type="PANTHER" id="PTHR15893">
    <property type="entry name" value="RIBOSOMAL PROTEIN L27"/>
    <property type="match status" value="1"/>
</dbReference>
<dbReference type="Pfam" id="PF01016">
    <property type="entry name" value="Ribosomal_L27"/>
    <property type="match status" value="1"/>
</dbReference>
<dbReference type="PRINTS" id="PR00063">
    <property type="entry name" value="RIBOSOMALL27"/>
</dbReference>
<dbReference type="SUPFAM" id="SSF110324">
    <property type="entry name" value="Ribosomal L27 protein-like"/>
    <property type="match status" value="1"/>
</dbReference>
<dbReference type="PROSITE" id="PS00831">
    <property type="entry name" value="RIBOSOMAL_L27"/>
    <property type="match status" value="1"/>
</dbReference>
<proteinExistence type="inferred from homology"/>
<geneLocation type="chloroplast"/>
<keyword id="KW-0150">Chloroplast</keyword>
<keyword id="KW-0934">Plastid</keyword>
<keyword id="KW-0687">Ribonucleoprotein</keyword>
<keyword id="KW-0689">Ribosomal protein</keyword>
<comment type="subcellular location">
    <subcellularLocation>
        <location>Plastid</location>
        <location>Chloroplast</location>
    </subcellularLocation>
</comment>
<comment type="similarity">
    <text evidence="2">Belongs to the bacterial ribosomal protein bL27 family.</text>
</comment>
<organism>
    <name type="scientific">Porphyra purpurea</name>
    <name type="common">Red seaweed</name>
    <name type="synonym">Ulva purpurea</name>
    <dbReference type="NCBI Taxonomy" id="2787"/>
    <lineage>
        <taxon>Eukaryota</taxon>
        <taxon>Rhodophyta</taxon>
        <taxon>Bangiophyceae</taxon>
        <taxon>Bangiales</taxon>
        <taxon>Bangiaceae</taxon>
        <taxon>Porphyra</taxon>
    </lineage>
</organism>
<gene>
    <name type="primary">rpl27</name>
</gene>
<accession>P51210</accession>
<feature type="chain" id="PRO_0000181227" description="Large ribosomal subunit protein bL27c">
    <location>
        <begin position="1"/>
        <end position="86"/>
    </location>
</feature>
<feature type="region of interest" description="Disordered" evidence="1">
    <location>
        <begin position="1"/>
        <end position="27"/>
    </location>
</feature>
<sequence length="86" mass="9356">MAHKKGSGSTRNGRDSNSKRLGVKKYGGEQVTAGNILIRQRGTKVKPGQNVGKGKDDTLFALIDGFVLFEKSNQKQKTISVYSSKN</sequence>
<reference key="1">
    <citation type="journal article" date="1995" name="Plant Mol. Biol. Rep.">
        <title>Complete nucleotide sequence of the Porphyra purpurea chloroplast genome.</title>
        <authorList>
            <person name="Reith M.E."/>
            <person name="Munholland J."/>
        </authorList>
    </citation>
    <scope>NUCLEOTIDE SEQUENCE [LARGE SCALE GENOMIC DNA]</scope>
    <source>
        <strain>Avonport</strain>
    </source>
</reference>
<protein>
    <recommendedName>
        <fullName evidence="2">Large ribosomal subunit protein bL27c</fullName>
    </recommendedName>
    <alternativeName>
        <fullName>50S ribosomal protein L27, chloroplastic</fullName>
    </alternativeName>
</protein>
<name>RK27_PORPU</name>